<sequence>MPLKLDIKRRLTSRSDRVKCVDLHPAEPWMLCALYNGHVHIMNYENQQMVKDFEVCDVPVRSARFVARKNWILTGSDDMQIRVFNYNTLEKVHSFEAHSDYLRCIAVHPTQPLVLTSSDDMLIKLWNWEKMWACQRVFEGHTHYVMQIVFNPKDNNTFASASLDRTVKVWQLGSNFANFTLEGHEKGVNCVDYYHGGDKPYLISGADDRLVKIWDYQNKTCVQTLEGHAQNISAVCFHPELPIVLTGSEDGTVRIWHSGTYRLETCLNYGFERVWTISSMRGTNNVALGYDEGSIIIKVGREEPAMSMDVVGSKIIWAKHSEMQQVNLKTIADGTEIKDGERLPVATKDMGACEIYPQTIAHNPNGRFVVVCGDGEYIIYTSMALRNKAFGSAQEFVWALESNEYAIRENNGTVRLFRNFKERKSFTPEYGAESIYGGYYFGVKTSSGLAFYDWETLQLVRRIEVQPKNVFWNESGSLVCLATDDSYFVLGVDTAQVANAVETKEGLEDDGVESAFNVLGEVSECVKTGLWVGDCFIYTNSVNRINYYVGGEIVTVSHLDRTMYLLGYVPKDNRIYLGDKELNVISFCLQLSVLEYQTAVMRRDFERADVVLPTIPKEHRTRVAHFLEKQGFKSQALQVSTDADHKFDLALQIGDLEIALKLARESENSQKWSQLADVASSKNNMSLVKECMQKANDLSGLLLLSTASGDAQLLEVVGAAGSAQGHHNLAFLSAFLRSDVERCLEILIETNRLPEAAFFARTYLPSQMSRIVELWREKLGKVNEKAGQSLADPAQYTNLFPGLGDALRVEQHLQEERARKAPARLAANLPLNSERHPLQELFAAEQGAAGQHLEEKVKPAYVPAQAVVSSSQVAEPTSAADDDDDLDLEIDGITLDDNIDTTDVNLDDDFLSDD</sequence>
<name>COPB2_DROME</name>
<accession>O62621</accession>
<accession>Q3KN33</accession>
<accession>Q8MRM3</accession>
<accession>Q9VJZ0</accession>
<comment type="function">
    <text evidence="1">The coatomer is a cytosolic protein complex that binds to dilysine motifs and reversibly associates with Golgi non-clathrin-coated vesicles, which further mediate biosynthetic protein transport from the ER, via the Golgi up to the trans Golgi network. Coatomer complex is required for budding from Golgi membranes, and is essential for the retrograde Golgi-to-ER transport of dilysine-tagged proteins (By similarity).</text>
</comment>
<comment type="subunit">
    <text evidence="1">Oligomeric complex that consists of at least the alpha, beta, beta', gamma, delta, epsilon and zeta subunits.</text>
</comment>
<comment type="subcellular location">
    <subcellularLocation>
        <location evidence="1">Cytoplasm</location>
    </subcellularLocation>
    <subcellularLocation>
        <location evidence="1">Golgi apparatus membrane</location>
        <topology evidence="1">Peripheral membrane protein</topology>
        <orientation evidence="1">Cytoplasmic side</orientation>
    </subcellularLocation>
    <subcellularLocation>
        <location evidence="1">Cytoplasmic vesicle</location>
        <location evidence="1">COPI-coated vesicle membrane</location>
        <topology evidence="1">Peripheral membrane protein</topology>
        <orientation evidence="1">Cytoplasmic side</orientation>
    </subcellularLocation>
    <text evidence="1">The coatomer is cytoplasmic or polymerized on the cytoplasmic side of the Golgi, as well as on the vesicles/buds originating from it.</text>
</comment>
<comment type="similarity">
    <text evidence="2">Belongs to the WD repeat COPB2 family.</text>
</comment>
<comment type="sequence caution" evidence="2">
    <conflict type="erroneous initiation">
        <sequence resource="EMBL-CDS" id="AAM50181"/>
    </conflict>
</comment>
<protein>
    <recommendedName>
        <fullName>Coatomer subunit beta'</fullName>
    </recommendedName>
    <alternativeName>
        <fullName>Beta'-coat protein</fullName>
        <shortName>Beta'-COP</shortName>
    </alternativeName>
</protein>
<reference key="1">
    <citation type="submission" date="1998-06" db="EMBL/GenBank/DDBJ databases">
        <title>Cloning and characterization of the Drosophila coatomer subunit beta'.</title>
        <authorList>
            <person name="Merdes G."/>
            <person name="Heid H.W."/>
            <person name="Mechler B.M."/>
        </authorList>
    </citation>
    <scope>NUCLEOTIDE SEQUENCE [GENOMIC DNA / MRNA]</scope>
    <source>
        <tissue>Embryo</tissue>
    </source>
</reference>
<reference key="2">
    <citation type="journal article" date="2000" name="Science">
        <title>The genome sequence of Drosophila melanogaster.</title>
        <authorList>
            <person name="Adams M.D."/>
            <person name="Celniker S.E."/>
            <person name="Holt R.A."/>
            <person name="Evans C.A."/>
            <person name="Gocayne J.D."/>
            <person name="Amanatides P.G."/>
            <person name="Scherer S.E."/>
            <person name="Li P.W."/>
            <person name="Hoskins R.A."/>
            <person name="Galle R.F."/>
            <person name="George R.A."/>
            <person name="Lewis S.E."/>
            <person name="Richards S."/>
            <person name="Ashburner M."/>
            <person name="Henderson S.N."/>
            <person name="Sutton G.G."/>
            <person name="Wortman J.R."/>
            <person name="Yandell M.D."/>
            <person name="Zhang Q."/>
            <person name="Chen L.X."/>
            <person name="Brandon R.C."/>
            <person name="Rogers Y.-H.C."/>
            <person name="Blazej R.G."/>
            <person name="Champe M."/>
            <person name="Pfeiffer B.D."/>
            <person name="Wan K.H."/>
            <person name="Doyle C."/>
            <person name="Baxter E.G."/>
            <person name="Helt G."/>
            <person name="Nelson C.R."/>
            <person name="Miklos G.L.G."/>
            <person name="Abril J.F."/>
            <person name="Agbayani A."/>
            <person name="An H.-J."/>
            <person name="Andrews-Pfannkoch C."/>
            <person name="Baldwin D."/>
            <person name="Ballew R.M."/>
            <person name="Basu A."/>
            <person name="Baxendale J."/>
            <person name="Bayraktaroglu L."/>
            <person name="Beasley E.M."/>
            <person name="Beeson K.Y."/>
            <person name="Benos P.V."/>
            <person name="Berman B.P."/>
            <person name="Bhandari D."/>
            <person name="Bolshakov S."/>
            <person name="Borkova D."/>
            <person name="Botchan M.R."/>
            <person name="Bouck J."/>
            <person name="Brokstein P."/>
            <person name="Brottier P."/>
            <person name="Burtis K.C."/>
            <person name="Busam D.A."/>
            <person name="Butler H."/>
            <person name="Cadieu E."/>
            <person name="Center A."/>
            <person name="Chandra I."/>
            <person name="Cherry J.M."/>
            <person name="Cawley S."/>
            <person name="Dahlke C."/>
            <person name="Davenport L.B."/>
            <person name="Davies P."/>
            <person name="de Pablos B."/>
            <person name="Delcher A."/>
            <person name="Deng Z."/>
            <person name="Mays A.D."/>
            <person name="Dew I."/>
            <person name="Dietz S.M."/>
            <person name="Dodson K."/>
            <person name="Doup L.E."/>
            <person name="Downes M."/>
            <person name="Dugan-Rocha S."/>
            <person name="Dunkov B.C."/>
            <person name="Dunn P."/>
            <person name="Durbin K.J."/>
            <person name="Evangelista C.C."/>
            <person name="Ferraz C."/>
            <person name="Ferriera S."/>
            <person name="Fleischmann W."/>
            <person name="Fosler C."/>
            <person name="Gabrielian A.E."/>
            <person name="Garg N.S."/>
            <person name="Gelbart W.M."/>
            <person name="Glasser K."/>
            <person name="Glodek A."/>
            <person name="Gong F."/>
            <person name="Gorrell J.H."/>
            <person name="Gu Z."/>
            <person name="Guan P."/>
            <person name="Harris M."/>
            <person name="Harris N.L."/>
            <person name="Harvey D.A."/>
            <person name="Heiman T.J."/>
            <person name="Hernandez J.R."/>
            <person name="Houck J."/>
            <person name="Hostin D."/>
            <person name="Houston K.A."/>
            <person name="Howland T.J."/>
            <person name="Wei M.-H."/>
            <person name="Ibegwam C."/>
            <person name="Jalali M."/>
            <person name="Kalush F."/>
            <person name="Karpen G.H."/>
            <person name="Ke Z."/>
            <person name="Kennison J.A."/>
            <person name="Ketchum K.A."/>
            <person name="Kimmel B.E."/>
            <person name="Kodira C.D."/>
            <person name="Kraft C.L."/>
            <person name="Kravitz S."/>
            <person name="Kulp D."/>
            <person name="Lai Z."/>
            <person name="Lasko P."/>
            <person name="Lei Y."/>
            <person name="Levitsky A.A."/>
            <person name="Li J.H."/>
            <person name="Li Z."/>
            <person name="Liang Y."/>
            <person name="Lin X."/>
            <person name="Liu X."/>
            <person name="Mattei B."/>
            <person name="McIntosh T.C."/>
            <person name="McLeod M.P."/>
            <person name="McPherson D."/>
            <person name="Merkulov G."/>
            <person name="Milshina N.V."/>
            <person name="Mobarry C."/>
            <person name="Morris J."/>
            <person name="Moshrefi A."/>
            <person name="Mount S.M."/>
            <person name="Moy M."/>
            <person name="Murphy B."/>
            <person name="Murphy L."/>
            <person name="Muzny D.M."/>
            <person name="Nelson D.L."/>
            <person name="Nelson D.R."/>
            <person name="Nelson K.A."/>
            <person name="Nixon K."/>
            <person name="Nusskern D.R."/>
            <person name="Pacleb J.M."/>
            <person name="Palazzolo M."/>
            <person name="Pittman G.S."/>
            <person name="Pan S."/>
            <person name="Pollard J."/>
            <person name="Puri V."/>
            <person name="Reese M.G."/>
            <person name="Reinert K."/>
            <person name="Remington K."/>
            <person name="Saunders R.D.C."/>
            <person name="Scheeler F."/>
            <person name="Shen H."/>
            <person name="Shue B.C."/>
            <person name="Siden-Kiamos I."/>
            <person name="Simpson M."/>
            <person name="Skupski M.P."/>
            <person name="Smith T.J."/>
            <person name="Spier E."/>
            <person name="Spradling A.C."/>
            <person name="Stapleton M."/>
            <person name="Strong R."/>
            <person name="Sun E."/>
            <person name="Svirskas R."/>
            <person name="Tector C."/>
            <person name="Turner R."/>
            <person name="Venter E."/>
            <person name="Wang A.H."/>
            <person name="Wang X."/>
            <person name="Wang Z.-Y."/>
            <person name="Wassarman D.A."/>
            <person name="Weinstock G.M."/>
            <person name="Weissenbach J."/>
            <person name="Williams S.M."/>
            <person name="Woodage T."/>
            <person name="Worley K.C."/>
            <person name="Wu D."/>
            <person name="Yang S."/>
            <person name="Yao Q.A."/>
            <person name="Ye J."/>
            <person name="Yeh R.-F."/>
            <person name="Zaveri J.S."/>
            <person name="Zhan M."/>
            <person name="Zhang G."/>
            <person name="Zhao Q."/>
            <person name="Zheng L."/>
            <person name="Zheng X.H."/>
            <person name="Zhong F.N."/>
            <person name="Zhong W."/>
            <person name="Zhou X."/>
            <person name="Zhu S.C."/>
            <person name="Zhu X."/>
            <person name="Smith H.O."/>
            <person name="Gibbs R.A."/>
            <person name="Myers E.W."/>
            <person name="Rubin G.M."/>
            <person name="Venter J.C."/>
        </authorList>
    </citation>
    <scope>NUCLEOTIDE SEQUENCE [LARGE SCALE GENOMIC DNA]</scope>
    <source>
        <strain>Berkeley</strain>
    </source>
</reference>
<reference key="3">
    <citation type="journal article" date="2002" name="Genome Biol.">
        <title>Annotation of the Drosophila melanogaster euchromatic genome: a systematic review.</title>
        <authorList>
            <person name="Misra S."/>
            <person name="Crosby M.A."/>
            <person name="Mungall C.J."/>
            <person name="Matthews B.B."/>
            <person name="Campbell K.S."/>
            <person name="Hradecky P."/>
            <person name="Huang Y."/>
            <person name="Kaminker J.S."/>
            <person name="Millburn G.H."/>
            <person name="Prochnik S.E."/>
            <person name="Smith C.D."/>
            <person name="Tupy J.L."/>
            <person name="Whitfield E.J."/>
            <person name="Bayraktaroglu L."/>
            <person name="Berman B.P."/>
            <person name="Bettencourt B.R."/>
            <person name="Celniker S.E."/>
            <person name="de Grey A.D.N.J."/>
            <person name="Drysdale R.A."/>
            <person name="Harris N.L."/>
            <person name="Richter J."/>
            <person name="Russo S."/>
            <person name="Schroeder A.J."/>
            <person name="Shu S.Q."/>
            <person name="Stapleton M."/>
            <person name="Yamada C."/>
            <person name="Ashburner M."/>
            <person name="Gelbart W.M."/>
            <person name="Rubin G.M."/>
            <person name="Lewis S.E."/>
        </authorList>
    </citation>
    <scope>GENOME REANNOTATION</scope>
    <source>
        <strain>Berkeley</strain>
    </source>
</reference>
<reference key="4">
    <citation type="submission" date="2005-10" db="EMBL/GenBank/DDBJ databases">
        <authorList>
            <person name="Stapleton M."/>
            <person name="Carlson J.W."/>
            <person name="Chavez C."/>
            <person name="Frise E."/>
            <person name="George R.A."/>
            <person name="Pacleb J.M."/>
            <person name="Park S."/>
            <person name="Wan K.H."/>
            <person name="Yu C."/>
            <person name="Celniker S.E."/>
        </authorList>
    </citation>
    <scope>NUCLEOTIDE SEQUENCE [LARGE SCALE MRNA]</scope>
    <source>
        <strain>Berkeley</strain>
        <tissue>Head</tissue>
    </source>
</reference>
<reference key="5">
    <citation type="journal article" date="2002" name="Genome Biol.">
        <title>A Drosophila full-length cDNA resource.</title>
        <authorList>
            <person name="Stapleton M."/>
            <person name="Carlson J.W."/>
            <person name="Brokstein P."/>
            <person name="Yu C."/>
            <person name="Champe M."/>
            <person name="George R.A."/>
            <person name="Guarin H."/>
            <person name="Kronmiller B."/>
            <person name="Pacleb J.M."/>
            <person name="Park S."/>
            <person name="Wan K.H."/>
            <person name="Rubin G.M."/>
            <person name="Celniker S.E."/>
        </authorList>
    </citation>
    <scope>NUCLEOTIDE SEQUENCE [LARGE SCALE MRNA] OF 613-914</scope>
    <source>
        <strain>Berkeley</strain>
        <tissue>Head</tissue>
    </source>
</reference>
<feature type="chain" id="PRO_0000050916" description="Coatomer subunit beta'">
    <location>
        <begin position="1"/>
        <end position="914"/>
    </location>
</feature>
<feature type="repeat" description="WD 1">
    <location>
        <begin position="13"/>
        <end position="54"/>
    </location>
</feature>
<feature type="repeat" description="WD 2">
    <location>
        <begin position="55"/>
        <end position="94"/>
    </location>
</feature>
<feature type="repeat" description="WD 3">
    <location>
        <begin position="97"/>
        <end position="136"/>
    </location>
</feature>
<feature type="repeat" description="WD 4">
    <location>
        <begin position="140"/>
        <end position="180"/>
    </location>
</feature>
<feature type="repeat" description="WD 5">
    <location>
        <begin position="183"/>
        <end position="224"/>
    </location>
</feature>
<feature type="repeat" description="WD 6">
    <location>
        <begin position="227"/>
        <end position="266"/>
    </location>
</feature>
<feature type="repeat" description="WD 7">
    <location>
        <begin position="352"/>
        <end position="390"/>
    </location>
</feature>
<feature type="sequence conflict" description="In Ref. 1; CAA07084/CAA07085." evidence="2" ref="1">
    <original>R</original>
    <variation>C</variation>
    <location>
        <position position="254"/>
    </location>
</feature>
<feature type="sequence conflict" description="In Ref. 1; CAA07084/CAA07085." evidence="2" ref="1">
    <original>LPV</original>
    <variation>CPF</variation>
    <location>
        <begin position="343"/>
        <end position="345"/>
    </location>
</feature>
<gene>
    <name evidence="3" type="primary">beta'COP</name>
    <name evidence="3" type="ORF">CG6699</name>
</gene>
<dbReference type="EMBL" id="AJ006523">
    <property type="protein sequence ID" value="CAA07084.1"/>
    <property type="molecule type" value="mRNA"/>
</dbReference>
<dbReference type="EMBL" id="AJ006524">
    <property type="protein sequence ID" value="CAA07085.1"/>
    <property type="molecule type" value="Genomic_DNA"/>
</dbReference>
<dbReference type="EMBL" id="AE014134">
    <property type="protein sequence ID" value="AAF53294.2"/>
    <property type="molecule type" value="Genomic_DNA"/>
</dbReference>
<dbReference type="EMBL" id="BT023906">
    <property type="protein sequence ID" value="ABA81840.1"/>
    <property type="molecule type" value="mRNA"/>
</dbReference>
<dbReference type="EMBL" id="AY119527">
    <property type="protein sequence ID" value="AAM50181.1"/>
    <property type="status" value="ALT_INIT"/>
    <property type="molecule type" value="mRNA"/>
</dbReference>
<dbReference type="RefSeq" id="NP_524836.2">
    <property type="nucleotide sequence ID" value="NM_080097.4"/>
</dbReference>
<dbReference type="SMR" id="O62621"/>
<dbReference type="BioGRID" id="69859">
    <property type="interactions" value="16"/>
</dbReference>
<dbReference type="ComplexPortal" id="CPX-2820">
    <property type="entry name" value="COPI vesicle coat complex"/>
</dbReference>
<dbReference type="DIP" id="DIP-22262N"/>
<dbReference type="FunCoup" id="O62621">
    <property type="interactions" value="2268"/>
</dbReference>
<dbReference type="IntAct" id="O62621">
    <property type="interactions" value="4"/>
</dbReference>
<dbReference type="STRING" id="7227.FBpp0080048"/>
<dbReference type="PaxDb" id="7227-FBpp0080048"/>
<dbReference type="DNASU" id="45757"/>
<dbReference type="EnsemblMetazoa" id="FBtr0080469">
    <property type="protein sequence ID" value="FBpp0080048"/>
    <property type="gene ID" value="FBgn0025724"/>
</dbReference>
<dbReference type="GeneID" id="45757"/>
<dbReference type="KEGG" id="dme:Dmel_CG6699"/>
<dbReference type="AGR" id="FB:FBgn0025724"/>
<dbReference type="CTD" id="45757"/>
<dbReference type="FlyBase" id="FBgn0025724">
    <property type="gene designation" value="beta'COP"/>
</dbReference>
<dbReference type="VEuPathDB" id="VectorBase:FBgn0025724"/>
<dbReference type="eggNOG" id="KOG0276">
    <property type="taxonomic scope" value="Eukaryota"/>
</dbReference>
<dbReference type="GeneTree" id="ENSGT00900000141083"/>
<dbReference type="HOGENOM" id="CLU_005507_1_0_1"/>
<dbReference type="InParanoid" id="O62621"/>
<dbReference type="OMA" id="YVDYYPQ"/>
<dbReference type="OrthoDB" id="2150324at2759"/>
<dbReference type="PhylomeDB" id="O62621"/>
<dbReference type="Reactome" id="R-DME-6807878">
    <property type="pathway name" value="COPI-mediated anterograde transport"/>
</dbReference>
<dbReference type="Reactome" id="R-DME-6811434">
    <property type="pathway name" value="COPI-dependent Golgi-to-ER retrograde traffic"/>
</dbReference>
<dbReference type="SignaLink" id="O62621"/>
<dbReference type="BioGRID-ORCS" id="45757">
    <property type="hits" value="1 hit in 1 CRISPR screen"/>
</dbReference>
<dbReference type="ChiTaRS" id="beta'COP">
    <property type="organism name" value="fly"/>
</dbReference>
<dbReference type="GenomeRNAi" id="45757"/>
<dbReference type="PRO" id="PR:O62621"/>
<dbReference type="Proteomes" id="UP000000803">
    <property type="component" value="Chromosome 2L"/>
</dbReference>
<dbReference type="Bgee" id="FBgn0025724">
    <property type="expression patterns" value="Expressed in spermathecum and 143 other cell types or tissues"/>
</dbReference>
<dbReference type="GO" id="GO:0030126">
    <property type="term" value="C:COPI vesicle coat"/>
    <property type="evidence" value="ECO:0000314"/>
    <property type="project" value="FlyBase"/>
</dbReference>
<dbReference type="GO" id="GO:0000139">
    <property type="term" value="C:Golgi membrane"/>
    <property type="evidence" value="ECO:0007669"/>
    <property type="project" value="UniProtKB-SubCell"/>
</dbReference>
<dbReference type="GO" id="GO:0005795">
    <property type="term" value="C:Golgi stack"/>
    <property type="evidence" value="ECO:0000314"/>
    <property type="project" value="FlyBase"/>
</dbReference>
<dbReference type="GO" id="GO:0005198">
    <property type="term" value="F:structural molecule activity"/>
    <property type="evidence" value="ECO:0007669"/>
    <property type="project" value="InterPro"/>
</dbReference>
<dbReference type="GO" id="GO:0006888">
    <property type="term" value="P:endoplasmic reticulum to Golgi vesicle-mediated transport"/>
    <property type="evidence" value="ECO:0000318"/>
    <property type="project" value="GO_Central"/>
</dbReference>
<dbReference type="GO" id="GO:0006891">
    <property type="term" value="P:intra-Golgi vesicle-mediated transport"/>
    <property type="evidence" value="ECO:0000318"/>
    <property type="project" value="GO_Central"/>
</dbReference>
<dbReference type="GO" id="GO:0006886">
    <property type="term" value="P:intracellular protein transport"/>
    <property type="evidence" value="ECO:0000318"/>
    <property type="project" value="GO_Central"/>
</dbReference>
<dbReference type="GO" id="GO:0010883">
    <property type="term" value="P:regulation of lipid storage"/>
    <property type="evidence" value="ECO:0000314"/>
    <property type="project" value="FlyBase"/>
</dbReference>
<dbReference type="GO" id="GO:0006890">
    <property type="term" value="P:retrograde vesicle-mediated transport, Golgi to endoplasmic reticulum"/>
    <property type="evidence" value="ECO:0000250"/>
    <property type="project" value="FlyBase"/>
</dbReference>
<dbReference type="CDD" id="cd22947">
    <property type="entry name" value="Coatomer_WDAD_beta-like"/>
    <property type="match status" value="1"/>
</dbReference>
<dbReference type="CDD" id="cd00200">
    <property type="entry name" value="WD40"/>
    <property type="match status" value="1"/>
</dbReference>
<dbReference type="FunFam" id="1.25.40.470:FF:000001">
    <property type="entry name" value="Coatomer subunit beta"/>
    <property type="match status" value="1"/>
</dbReference>
<dbReference type="FunFam" id="2.130.10.10:FF:000008">
    <property type="entry name" value="Coatomer subunit beta"/>
    <property type="match status" value="1"/>
</dbReference>
<dbReference type="Gene3D" id="1.25.40.470">
    <property type="match status" value="1"/>
</dbReference>
<dbReference type="Gene3D" id="2.130.10.10">
    <property type="entry name" value="YVTN repeat-like/Quinoprotein amine dehydrogenase"/>
    <property type="match status" value="1"/>
</dbReference>
<dbReference type="InterPro" id="IPR006692">
    <property type="entry name" value="Beta-prop_COPA/B_2nd"/>
</dbReference>
<dbReference type="InterPro" id="IPR050844">
    <property type="entry name" value="Coatomer_complex_subunit"/>
</dbReference>
<dbReference type="InterPro" id="IPR016453">
    <property type="entry name" value="COPB2"/>
</dbReference>
<dbReference type="InterPro" id="IPR020472">
    <property type="entry name" value="G-protein_beta_WD-40_rep"/>
</dbReference>
<dbReference type="InterPro" id="IPR056176">
    <property type="entry name" value="TPR_COPA_B"/>
</dbReference>
<dbReference type="InterPro" id="IPR015943">
    <property type="entry name" value="WD40/YVTN_repeat-like_dom_sf"/>
</dbReference>
<dbReference type="InterPro" id="IPR036322">
    <property type="entry name" value="WD40_repeat_dom_sf"/>
</dbReference>
<dbReference type="InterPro" id="IPR001680">
    <property type="entry name" value="WD40_rpt"/>
</dbReference>
<dbReference type="PANTHER" id="PTHR19876">
    <property type="entry name" value="COATOMER"/>
    <property type="match status" value="1"/>
</dbReference>
<dbReference type="PANTHER" id="PTHR19876:SF2">
    <property type="entry name" value="COATOMER SUBUNIT BETA"/>
    <property type="match status" value="1"/>
</dbReference>
<dbReference type="Pfam" id="PF04053">
    <property type="entry name" value="B-prop_COPA_B_2nd"/>
    <property type="match status" value="1"/>
</dbReference>
<dbReference type="Pfam" id="PF23953">
    <property type="entry name" value="TPR_COPA_B"/>
    <property type="match status" value="1"/>
</dbReference>
<dbReference type="Pfam" id="PF00400">
    <property type="entry name" value="WD40"/>
    <property type="match status" value="5"/>
</dbReference>
<dbReference type="PIRSF" id="PIRSF005567">
    <property type="entry name" value="Coatomer_beta'_subunit"/>
    <property type="match status" value="1"/>
</dbReference>
<dbReference type="PRINTS" id="PR00320">
    <property type="entry name" value="GPROTEINBRPT"/>
</dbReference>
<dbReference type="SMART" id="SM00320">
    <property type="entry name" value="WD40"/>
    <property type="match status" value="6"/>
</dbReference>
<dbReference type="SUPFAM" id="SSF50978">
    <property type="entry name" value="WD40 repeat-like"/>
    <property type="match status" value="2"/>
</dbReference>
<dbReference type="PROSITE" id="PS50082">
    <property type="entry name" value="WD_REPEATS_2"/>
    <property type="match status" value="4"/>
</dbReference>
<dbReference type="PROSITE" id="PS50294">
    <property type="entry name" value="WD_REPEATS_REGION"/>
    <property type="match status" value="1"/>
</dbReference>
<organism>
    <name type="scientific">Drosophila melanogaster</name>
    <name type="common">Fruit fly</name>
    <dbReference type="NCBI Taxonomy" id="7227"/>
    <lineage>
        <taxon>Eukaryota</taxon>
        <taxon>Metazoa</taxon>
        <taxon>Ecdysozoa</taxon>
        <taxon>Arthropoda</taxon>
        <taxon>Hexapoda</taxon>
        <taxon>Insecta</taxon>
        <taxon>Pterygota</taxon>
        <taxon>Neoptera</taxon>
        <taxon>Endopterygota</taxon>
        <taxon>Diptera</taxon>
        <taxon>Brachycera</taxon>
        <taxon>Muscomorpha</taxon>
        <taxon>Ephydroidea</taxon>
        <taxon>Drosophilidae</taxon>
        <taxon>Drosophila</taxon>
        <taxon>Sophophora</taxon>
    </lineage>
</organism>
<proteinExistence type="evidence at transcript level"/>
<evidence type="ECO:0000250" key="1"/>
<evidence type="ECO:0000305" key="2"/>
<evidence type="ECO:0000312" key="3">
    <source>
        <dbReference type="FlyBase" id="FBgn0025724"/>
    </source>
</evidence>
<keyword id="KW-0963">Cytoplasm</keyword>
<keyword id="KW-0968">Cytoplasmic vesicle</keyword>
<keyword id="KW-0931">ER-Golgi transport</keyword>
<keyword id="KW-0333">Golgi apparatus</keyword>
<keyword id="KW-0472">Membrane</keyword>
<keyword id="KW-0653">Protein transport</keyword>
<keyword id="KW-1185">Reference proteome</keyword>
<keyword id="KW-0677">Repeat</keyword>
<keyword id="KW-0813">Transport</keyword>
<keyword id="KW-0853">WD repeat</keyword>